<feature type="chain" id="PRO_1000069345" description="ADP-L-glycero-D-manno-heptose-6-epimerase">
    <location>
        <begin position="1"/>
        <end position="330"/>
    </location>
</feature>
<feature type="active site" description="Proton acceptor" evidence="1">
    <location>
        <position position="139"/>
    </location>
</feature>
<feature type="active site" description="Proton acceptor" evidence="1">
    <location>
        <position position="177"/>
    </location>
</feature>
<feature type="binding site" evidence="1">
    <location>
        <begin position="11"/>
        <end position="12"/>
    </location>
    <ligand>
        <name>NADP(+)</name>
        <dbReference type="ChEBI" id="CHEBI:58349"/>
    </ligand>
</feature>
<feature type="binding site" evidence="1">
    <location>
        <begin position="32"/>
        <end position="33"/>
    </location>
    <ligand>
        <name>NADP(+)</name>
        <dbReference type="ChEBI" id="CHEBI:58349"/>
    </ligand>
</feature>
<feature type="binding site" evidence="1">
    <location>
        <position position="39"/>
    </location>
    <ligand>
        <name>NADP(+)</name>
        <dbReference type="ChEBI" id="CHEBI:58349"/>
    </ligand>
</feature>
<feature type="binding site" evidence="1">
    <location>
        <position position="54"/>
    </location>
    <ligand>
        <name>NADP(+)</name>
        <dbReference type="ChEBI" id="CHEBI:58349"/>
    </ligand>
</feature>
<feature type="binding site" evidence="1">
    <location>
        <begin position="75"/>
        <end position="79"/>
    </location>
    <ligand>
        <name>NADP(+)</name>
        <dbReference type="ChEBI" id="CHEBI:58349"/>
    </ligand>
</feature>
<feature type="binding site" evidence="1">
    <location>
        <position position="92"/>
    </location>
    <ligand>
        <name>NADP(+)</name>
        <dbReference type="ChEBI" id="CHEBI:58349"/>
    </ligand>
</feature>
<feature type="binding site" evidence="1">
    <location>
        <position position="143"/>
    </location>
    <ligand>
        <name>NADP(+)</name>
        <dbReference type="ChEBI" id="CHEBI:58349"/>
    </ligand>
</feature>
<feature type="binding site" evidence="1">
    <location>
        <position position="168"/>
    </location>
    <ligand>
        <name>substrate</name>
    </ligand>
</feature>
<feature type="binding site" evidence="1">
    <location>
        <position position="169"/>
    </location>
    <ligand>
        <name>NADP(+)</name>
        <dbReference type="ChEBI" id="CHEBI:58349"/>
    </ligand>
</feature>
<feature type="binding site" evidence="1">
    <location>
        <position position="177"/>
    </location>
    <ligand>
        <name>NADP(+)</name>
        <dbReference type="ChEBI" id="CHEBI:58349"/>
    </ligand>
</feature>
<feature type="binding site" evidence="1">
    <location>
        <position position="179"/>
    </location>
    <ligand>
        <name>substrate</name>
    </ligand>
</feature>
<feature type="binding site" evidence="1">
    <location>
        <position position="186"/>
    </location>
    <ligand>
        <name>substrate</name>
    </ligand>
</feature>
<feature type="binding site" evidence="1">
    <location>
        <begin position="200"/>
        <end position="203"/>
    </location>
    <ligand>
        <name>substrate</name>
    </ligand>
</feature>
<feature type="binding site" evidence="1">
    <location>
        <position position="213"/>
    </location>
    <ligand>
        <name>substrate</name>
    </ligand>
</feature>
<feature type="binding site" evidence="1">
    <location>
        <position position="292"/>
    </location>
    <ligand>
        <name>substrate</name>
    </ligand>
</feature>
<keyword id="KW-0119">Carbohydrate metabolism</keyword>
<keyword id="KW-0413">Isomerase</keyword>
<keyword id="KW-0521">NADP</keyword>
<accession>A3MHP7</accession>
<gene>
    <name evidence="1" type="primary">hldD</name>
    <name type="ordered locus">BMA10247_0208</name>
</gene>
<reference key="1">
    <citation type="journal article" date="2010" name="Genome Biol. Evol.">
        <title>Continuing evolution of Burkholderia mallei through genome reduction and large-scale rearrangements.</title>
        <authorList>
            <person name="Losada L."/>
            <person name="Ronning C.M."/>
            <person name="DeShazer D."/>
            <person name="Woods D."/>
            <person name="Fedorova N."/>
            <person name="Kim H.S."/>
            <person name="Shabalina S.A."/>
            <person name="Pearson T.R."/>
            <person name="Brinkac L."/>
            <person name="Tan P."/>
            <person name="Nandi T."/>
            <person name="Crabtree J."/>
            <person name="Badger J."/>
            <person name="Beckstrom-Sternberg S."/>
            <person name="Saqib M."/>
            <person name="Schutzer S.E."/>
            <person name="Keim P."/>
            <person name="Nierman W.C."/>
        </authorList>
    </citation>
    <scope>NUCLEOTIDE SEQUENCE [LARGE SCALE GENOMIC DNA]</scope>
    <source>
        <strain>NCTC 10247</strain>
    </source>
</reference>
<name>HLDD_BURM7</name>
<comment type="function">
    <text evidence="1">Catalyzes the interconversion between ADP-D-glycero-beta-D-manno-heptose and ADP-L-glycero-beta-D-manno-heptose via an epimerization at carbon 6 of the heptose.</text>
</comment>
<comment type="catalytic activity">
    <reaction evidence="1">
        <text>ADP-D-glycero-beta-D-manno-heptose = ADP-L-glycero-beta-D-manno-heptose</text>
        <dbReference type="Rhea" id="RHEA:17577"/>
        <dbReference type="ChEBI" id="CHEBI:59967"/>
        <dbReference type="ChEBI" id="CHEBI:61506"/>
        <dbReference type="EC" id="5.1.3.20"/>
    </reaction>
</comment>
<comment type="cofactor">
    <cofactor evidence="1">
        <name>NADP(+)</name>
        <dbReference type="ChEBI" id="CHEBI:58349"/>
    </cofactor>
    <text evidence="1">Binds 1 NADP(+) per subunit.</text>
</comment>
<comment type="pathway">
    <text evidence="1">Nucleotide-sugar biosynthesis; ADP-L-glycero-beta-D-manno-heptose biosynthesis; ADP-L-glycero-beta-D-manno-heptose from D-glycero-beta-D-manno-heptose 7-phosphate: step 4/4.</text>
</comment>
<comment type="subunit">
    <text evidence="1">Homopentamer.</text>
</comment>
<comment type="domain">
    <text evidence="1">Contains a large N-terminal NADP-binding domain, and a smaller C-terminal substrate-binding domain.</text>
</comment>
<comment type="similarity">
    <text evidence="1">Belongs to the NAD(P)-dependent epimerase/dehydratase family. HldD subfamily.</text>
</comment>
<protein>
    <recommendedName>
        <fullName evidence="1">ADP-L-glycero-D-manno-heptose-6-epimerase</fullName>
        <ecNumber evidence="1">5.1.3.20</ecNumber>
    </recommendedName>
    <alternativeName>
        <fullName evidence="1">ADP-L-glycero-beta-D-manno-heptose-6-epimerase</fullName>
        <shortName evidence="1">ADP-glyceromanno-heptose 6-epimerase</shortName>
        <shortName evidence="1">ADP-hep 6-epimerase</shortName>
        <shortName evidence="1">AGME</shortName>
    </alternativeName>
</protein>
<evidence type="ECO:0000255" key="1">
    <source>
        <dbReference type="HAMAP-Rule" id="MF_01601"/>
    </source>
</evidence>
<organism>
    <name type="scientific">Burkholderia mallei (strain NCTC 10247)</name>
    <dbReference type="NCBI Taxonomy" id="320389"/>
    <lineage>
        <taxon>Bacteria</taxon>
        <taxon>Pseudomonadati</taxon>
        <taxon>Pseudomonadota</taxon>
        <taxon>Betaproteobacteria</taxon>
        <taxon>Burkholderiales</taxon>
        <taxon>Burkholderiaceae</taxon>
        <taxon>Burkholderia</taxon>
        <taxon>pseudomallei group</taxon>
    </lineage>
</organism>
<proteinExistence type="inferred from homology"/>
<dbReference type="EC" id="5.1.3.20" evidence="1"/>
<dbReference type="EMBL" id="CP000548">
    <property type="protein sequence ID" value="ABO06908.1"/>
    <property type="molecule type" value="Genomic_DNA"/>
</dbReference>
<dbReference type="SMR" id="A3MHP7"/>
<dbReference type="KEGG" id="bmaz:BM44_2783"/>
<dbReference type="KEGG" id="bmn:BMA10247_0208"/>
<dbReference type="PATRIC" id="fig|320389.8.peg.3142"/>
<dbReference type="UniPathway" id="UPA00356">
    <property type="reaction ID" value="UER00440"/>
</dbReference>
<dbReference type="GO" id="GO:0008712">
    <property type="term" value="F:ADP-glyceromanno-heptose 6-epimerase activity"/>
    <property type="evidence" value="ECO:0007669"/>
    <property type="project" value="UniProtKB-UniRule"/>
</dbReference>
<dbReference type="GO" id="GO:0050661">
    <property type="term" value="F:NADP binding"/>
    <property type="evidence" value="ECO:0007669"/>
    <property type="project" value="InterPro"/>
</dbReference>
<dbReference type="GO" id="GO:0097171">
    <property type="term" value="P:ADP-L-glycero-beta-D-manno-heptose biosynthetic process"/>
    <property type="evidence" value="ECO:0007669"/>
    <property type="project" value="UniProtKB-UniPathway"/>
</dbReference>
<dbReference type="GO" id="GO:0005975">
    <property type="term" value="P:carbohydrate metabolic process"/>
    <property type="evidence" value="ECO:0007669"/>
    <property type="project" value="UniProtKB-UniRule"/>
</dbReference>
<dbReference type="CDD" id="cd05248">
    <property type="entry name" value="ADP_GME_SDR_e"/>
    <property type="match status" value="1"/>
</dbReference>
<dbReference type="Gene3D" id="3.40.50.720">
    <property type="entry name" value="NAD(P)-binding Rossmann-like Domain"/>
    <property type="match status" value="1"/>
</dbReference>
<dbReference type="Gene3D" id="3.90.25.10">
    <property type="entry name" value="UDP-galactose 4-epimerase, domain 1"/>
    <property type="match status" value="1"/>
</dbReference>
<dbReference type="HAMAP" id="MF_01601">
    <property type="entry name" value="Heptose_epimerase"/>
    <property type="match status" value="1"/>
</dbReference>
<dbReference type="InterPro" id="IPR001509">
    <property type="entry name" value="Epimerase_deHydtase"/>
</dbReference>
<dbReference type="InterPro" id="IPR011912">
    <property type="entry name" value="Heptose_epim"/>
</dbReference>
<dbReference type="InterPro" id="IPR036291">
    <property type="entry name" value="NAD(P)-bd_dom_sf"/>
</dbReference>
<dbReference type="NCBIfam" id="TIGR02197">
    <property type="entry name" value="heptose_epim"/>
    <property type="match status" value="1"/>
</dbReference>
<dbReference type="PANTHER" id="PTHR43103:SF3">
    <property type="entry name" value="ADP-L-GLYCERO-D-MANNO-HEPTOSE-6-EPIMERASE"/>
    <property type="match status" value="1"/>
</dbReference>
<dbReference type="PANTHER" id="PTHR43103">
    <property type="entry name" value="NUCLEOSIDE-DIPHOSPHATE-SUGAR EPIMERASE"/>
    <property type="match status" value="1"/>
</dbReference>
<dbReference type="Pfam" id="PF01370">
    <property type="entry name" value="Epimerase"/>
    <property type="match status" value="1"/>
</dbReference>
<dbReference type="SUPFAM" id="SSF51735">
    <property type="entry name" value="NAD(P)-binding Rossmann-fold domains"/>
    <property type="match status" value="1"/>
</dbReference>
<sequence length="330" mass="37046">MTLIVTGAAGFIGANIVKALNERGETRIIAVDNLTRADKFKNLVDCEIDDYLDKTEFVERFARGDFGKVRAVFHEGACSDTMETDGRYMMDNNFRYSRAVLDACLAQGTQFLYASSAAIYGGSSRFVEAREFEAPLNVYGYSKFLFDQVIRRVMPSAKSQIAGFRYFNVYGPRESHKGRMASVAFHNFNQFRAEGKVKLFGEYNGYGPGEQTRDFVSVEDVAKVNLHFFDHPQKSGIFNLGTGRAQPFNDIATTVVNTLRALEGQPALTLAEQVEQGLVEYVPFPDALRGKYQCFTQADQTKLRAAGYDAPFLTVQEGVDRYVRWLFGQL</sequence>